<keyword id="KW-0150">Chloroplast</keyword>
<keyword id="KW-0201">Cytochrome c-type biogenesis</keyword>
<keyword id="KW-0472">Membrane</keyword>
<keyword id="KW-0934">Plastid</keyword>
<keyword id="KW-0812">Transmembrane</keyword>
<keyword id="KW-1133">Transmembrane helix</keyword>
<protein>
    <recommendedName>
        <fullName>Putative cytochrome c-type biogenesis protein DbsD-like</fullName>
    </recommendedName>
    <alternativeName>
        <fullName>ORF240</fullName>
    </alternativeName>
</protein>
<dbReference type="EMBL" id="U38804">
    <property type="protein sequence ID" value="AAC08250.1"/>
    <property type="molecule type" value="Genomic_DNA"/>
</dbReference>
<dbReference type="PIR" id="S73285">
    <property type="entry name" value="S73285"/>
</dbReference>
<dbReference type="RefSeq" id="NP_053974.1">
    <property type="nucleotide sequence ID" value="NC_000925.1"/>
</dbReference>
<dbReference type="SMR" id="P51364"/>
<dbReference type="GeneID" id="810003"/>
<dbReference type="GO" id="GO:0031969">
    <property type="term" value="C:chloroplast membrane"/>
    <property type="evidence" value="ECO:0007669"/>
    <property type="project" value="UniProtKB-SubCell"/>
</dbReference>
<dbReference type="GO" id="GO:0017004">
    <property type="term" value="P:cytochrome complex assembly"/>
    <property type="evidence" value="ECO:0007669"/>
    <property type="project" value="UniProtKB-KW"/>
</dbReference>
<dbReference type="InterPro" id="IPR003834">
    <property type="entry name" value="Cyt_c_assmbl_TM_dom"/>
</dbReference>
<dbReference type="InterPro" id="IPR051790">
    <property type="entry name" value="Cytochrome_c-biogenesis_DsbD"/>
</dbReference>
<dbReference type="PANTHER" id="PTHR31272:SF6">
    <property type="entry name" value="CYTOCHROME C-TYPE BIOGENESIS CCDA-LIKE CHLOROPLASTIC PROTEIN"/>
    <property type="match status" value="1"/>
</dbReference>
<dbReference type="PANTHER" id="PTHR31272">
    <property type="entry name" value="CYTOCHROME C-TYPE BIOGENESIS PROTEIN HI_1454-RELATED"/>
    <property type="match status" value="1"/>
</dbReference>
<dbReference type="Pfam" id="PF02683">
    <property type="entry name" value="DsbD_TM"/>
    <property type="match status" value="1"/>
</dbReference>
<name>YCXN_PORPU</name>
<accession>P51364</accession>
<organism>
    <name type="scientific">Porphyra purpurea</name>
    <name type="common">Red seaweed</name>
    <name type="synonym">Ulva purpurea</name>
    <dbReference type="NCBI Taxonomy" id="2787"/>
    <lineage>
        <taxon>Eukaryota</taxon>
        <taxon>Rhodophyta</taxon>
        <taxon>Bangiophyceae</taxon>
        <taxon>Bangiales</taxon>
        <taxon>Bangiaceae</taxon>
        <taxon>Porphyra</taxon>
    </lineage>
</organism>
<reference key="1">
    <citation type="journal article" date="1995" name="Plant Mol. Biol. Rep.">
        <title>Complete nucleotide sequence of the Porphyra purpurea chloroplast genome.</title>
        <authorList>
            <person name="Reith M.E."/>
            <person name="Munholland J."/>
        </authorList>
    </citation>
    <scope>NUCLEOTIDE SEQUENCE [LARGE SCALE GENOMIC DNA]</scope>
    <source>
        <strain>Avonport</strain>
    </source>
</reference>
<comment type="function">
    <text evidence="1">Could be involved in cytochrome c synthesis.</text>
</comment>
<comment type="subcellular location">
    <subcellularLocation>
        <location evidence="3">Plastid</location>
        <location evidence="3">Chloroplast membrane</location>
        <topology evidence="3">Multi-pass membrane protein</topology>
    </subcellularLocation>
</comment>
<comment type="similarity">
    <text evidence="3">Belongs to the DsbD family.</text>
</comment>
<geneLocation type="chloroplast"/>
<sequence length="240" mass="26465">MKPDVLLYNSQHLINNITLYQLNHINIASFSFVFFSGLFTSFSPCLISILPICIMYISGEGQKLSQIDKLKNLFFFCLGAISSFTTLGLIATLLAKTYSQLFNGIPVISALVIIYMGFSLLNIVPLSTNNLNTRINNTNQNIKMYLSGVGIGLAISSCSTPIFVTLLIWVTSNHNLFIGLIFILIYSIGYIFPIIIGSLFSSRFLTTASSPFLNNLWAPFSGTILLSAGTFSLFSSILKY</sequence>
<proteinExistence type="inferred from homology"/>
<evidence type="ECO:0000250" key="1"/>
<evidence type="ECO:0000255" key="2"/>
<evidence type="ECO:0000305" key="3"/>
<feature type="chain" id="PRO_0000201626" description="Putative cytochrome c-type biogenesis protein DbsD-like">
    <location>
        <begin position="1"/>
        <end position="240"/>
    </location>
</feature>
<feature type="transmembrane region" description="Helical" evidence="2">
    <location>
        <begin position="32"/>
        <end position="52"/>
    </location>
</feature>
<feature type="transmembrane region" description="Helical" evidence="2">
    <location>
        <begin position="74"/>
        <end position="94"/>
    </location>
</feature>
<feature type="transmembrane region" description="Helical" evidence="2">
    <location>
        <begin position="104"/>
        <end position="124"/>
    </location>
</feature>
<feature type="transmembrane region" description="Helical" evidence="2">
    <location>
        <begin position="149"/>
        <end position="169"/>
    </location>
</feature>
<feature type="transmembrane region" description="Helical" evidence="2">
    <location>
        <begin position="176"/>
        <end position="196"/>
    </location>
</feature>
<feature type="transmembrane region" description="Helical" evidence="2">
    <location>
        <begin position="218"/>
        <end position="238"/>
    </location>
</feature>